<keyword id="KW-0997">Cell inner membrane</keyword>
<keyword id="KW-1003">Cell membrane</keyword>
<keyword id="KW-0472">Membrane</keyword>
<keyword id="KW-0511">Multifunctional enzyme</keyword>
<keyword id="KW-0520">NAD</keyword>
<keyword id="KW-0874">Quinone</keyword>
<keyword id="KW-1185">Reference proteome</keyword>
<keyword id="KW-1278">Translocase</keyword>
<keyword id="KW-0813">Transport</keyword>
<keyword id="KW-0830">Ubiquinone</keyword>
<sequence>MVNNMTDLTAQEPAWQTRDHLDDPVIGELRNRFGPDAFTVQATRTGVPVVWIKREQLLEVGDFLKKLPKPYVMLFDLHGMDERLRTHREGLPAADFSVFYHLISIDRNRDIMLKVALAENDLHVPTFTKLFPNANWYERETWDLFGITFDGHPNLRRIMMPQTWKGHPLRKDYPARATEFSPFELTKAKQDLEMEALTFKPEEWGMKRGTENEDFMFLNLGPNHPSAHGAFRIVLQLDGEEIVDCVPDIGYHHRGAEKMGERQSWHSYIPYTDRIEYLGGCVNEMPYVLAVEKLAGITVPDRVNVIRVMLSELFRINSHLLYISTFIQDVGAMTPVFFAFTDRQKIYDLVEAITGFRMHPAWFRIGGVAHDLPRGWDRLLREFLDWMPKRLASYEKAALQNTILKGRSQGVAAYGAKEALEWGTTGAGLRATGIDFDVRKARPYSGYENFDFEIPVGGGVSDCYTRVMLKVEELRQSLRILEQCLNNMPEGPFKADHPLTTPPPKERTLQHIETLITHFLQVSWGPVMPANESFQMIEATKGINSYYLTSDGSTMSYRTRIRTPSYAHLQQIPAAIRGSLVSDLIVYLGSIDFVMSDVDR</sequence>
<gene>
    <name evidence="1" type="primary">nuoC</name>
    <name evidence="1" type="synonym">nuoCD</name>
    <name evidence="1" type="synonym">nuoD</name>
    <name type="ordered locus">SF2362</name>
    <name type="ordered locus">S2497</name>
</gene>
<feature type="chain" id="PRO_0000358698" description="NADH-quinone oxidoreductase subunit C/D">
    <location>
        <begin position="1"/>
        <end position="600"/>
    </location>
</feature>
<feature type="region of interest" description="NADH dehydrogenase I subunit C" evidence="1">
    <location>
        <begin position="1"/>
        <end position="190"/>
    </location>
</feature>
<feature type="region of interest" description="NADH dehydrogenase I subunit D" evidence="1">
    <location>
        <begin position="214"/>
        <end position="600"/>
    </location>
</feature>
<accession>Q83QS6</accession>
<accession>Q7C0Q1</accession>
<organism>
    <name type="scientific">Shigella flexneri</name>
    <dbReference type="NCBI Taxonomy" id="623"/>
    <lineage>
        <taxon>Bacteria</taxon>
        <taxon>Pseudomonadati</taxon>
        <taxon>Pseudomonadota</taxon>
        <taxon>Gammaproteobacteria</taxon>
        <taxon>Enterobacterales</taxon>
        <taxon>Enterobacteriaceae</taxon>
        <taxon>Shigella</taxon>
    </lineage>
</organism>
<dbReference type="EC" id="7.1.1.-" evidence="1"/>
<dbReference type="EMBL" id="AE005674">
    <property type="protein sequence ID" value="AAN43875.1"/>
    <property type="molecule type" value="Genomic_DNA"/>
</dbReference>
<dbReference type="EMBL" id="AE014073">
    <property type="protein sequence ID" value="AAP17693.1"/>
    <property type="molecule type" value="Genomic_DNA"/>
</dbReference>
<dbReference type="RefSeq" id="NP_708168.1">
    <property type="nucleotide sequence ID" value="NC_004337.2"/>
</dbReference>
<dbReference type="RefSeq" id="WP_000247878.1">
    <property type="nucleotide sequence ID" value="NZ_WPGW01000084.1"/>
</dbReference>
<dbReference type="SMR" id="Q83QS6"/>
<dbReference type="STRING" id="198214.SF2362"/>
<dbReference type="PaxDb" id="198214-SF2362"/>
<dbReference type="GeneID" id="1025540"/>
<dbReference type="GeneID" id="93774888"/>
<dbReference type="KEGG" id="sfl:SF2362"/>
<dbReference type="KEGG" id="sfx:S2497"/>
<dbReference type="PATRIC" id="fig|198214.7.peg.2828"/>
<dbReference type="HOGENOM" id="CLU_015134_3_2_6"/>
<dbReference type="Proteomes" id="UP000001006">
    <property type="component" value="Chromosome"/>
</dbReference>
<dbReference type="Proteomes" id="UP000002673">
    <property type="component" value="Chromosome"/>
</dbReference>
<dbReference type="GO" id="GO:0030964">
    <property type="term" value="C:NADH dehydrogenase complex"/>
    <property type="evidence" value="ECO:0007669"/>
    <property type="project" value="InterPro"/>
</dbReference>
<dbReference type="GO" id="GO:0005886">
    <property type="term" value="C:plasma membrane"/>
    <property type="evidence" value="ECO:0007669"/>
    <property type="project" value="UniProtKB-SubCell"/>
</dbReference>
<dbReference type="GO" id="GO:0051287">
    <property type="term" value="F:NAD binding"/>
    <property type="evidence" value="ECO:0007669"/>
    <property type="project" value="InterPro"/>
</dbReference>
<dbReference type="GO" id="GO:0008137">
    <property type="term" value="F:NADH dehydrogenase (ubiquinone) activity"/>
    <property type="evidence" value="ECO:0007669"/>
    <property type="project" value="InterPro"/>
</dbReference>
<dbReference type="GO" id="GO:0050136">
    <property type="term" value="F:NADH:ubiquinone reductase (non-electrogenic) activity"/>
    <property type="evidence" value="ECO:0007669"/>
    <property type="project" value="UniProtKB-UniRule"/>
</dbReference>
<dbReference type="GO" id="GO:0048038">
    <property type="term" value="F:quinone binding"/>
    <property type="evidence" value="ECO:0007669"/>
    <property type="project" value="UniProtKB-KW"/>
</dbReference>
<dbReference type="FunFam" id="1.10.645.10:FF:000001">
    <property type="entry name" value="NADH-quinone oxidoreductase subunit C/D"/>
    <property type="match status" value="1"/>
</dbReference>
<dbReference type="FunFam" id="3.30.460.80:FF:000001">
    <property type="entry name" value="NADH-quinone oxidoreductase subunit C/D"/>
    <property type="match status" value="1"/>
</dbReference>
<dbReference type="Gene3D" id="1.10.645.10">
    <property type="entry name" value="Cytochrome-c3 Hydrogenase, chain B"/>
    <property type="match status" value="1"/>
</dbReference>
<dbReference type="Gene3D" id="3.30.460.80">
    <property type="entry name" value="NADH:ubiquinone oxidoreductase, 30kDa subunit"/>
    <property type="match status" value="1"/>
</dbReference>
<dbReference type="HAMAP" id="MF_01357">
    <property type="entry name" value="NDH1_NuoC"/>
    <property type="match status" value="1"/>
</dbReference>
<dbReference type="HAMAP" id="MF_01359">
    <property type="entry name" value="NDH1_NuoCD_1"/>
    <property type="match status" value="1"/>
</dbReference>
<dbReference type="HAMAP" id="MF_01358">
    <property type="entry name" value="NDH1_NuoD"/>
    <property type="match status" value="1"/>
</dbReference>
<dbReference type="InterPro" id="IPR010218">
    <property type="entry name" value="NADH_DH_suC"/>
</dbReference>
<dbReference type="InterPro" id="IPR023062">
    <property type="entry name" value="NADH_DH_suCD"/>
</dbReference>
<dbReference type="InterPro" id="IPR001135">
    <property type="entry name" value="NADH_Q_OxRdtase_suD"/>
</dbReference>
<dbReference type="InterPro" id="IPR037232">
    <property type="entry name" value="NADH_quin_OxRdtase_su_C/D-like"/>
</dbReference>
<dbReference type="InterPro" id="IPR001268">
    <property type="entry name" value="NADH_UbQ_OxRdtase_30kDa_su"/>
</dbReference>
<dbReference type="InterPro" id="IPR014029">
    <property type="entry name" value="NADH_UbQ_OxRdtase_49kDa_CS"/>
</dbReference>
<dbReference type="InterPro" id="IPR020396">
    <property type="entry name" value="NADH_UbQ_OxRdtase_CS"/>
</dbReference>
<dbReference type="InterPro" id="IPR022885">
    <property type="entry name" value="NDH1_su_D/H"/>
</dbReference>
<dbReference type="InterPro" id="IPR029014">
    <property type="entry name" value="NiFe-Hase_large"/>
</dbReference>
<dbReference type="NCBIfam" id="TIGR01961">
    <property type="entry name" value="NuoC_fam"/>
    <property type="match status" value="1"/>
</dbReference>
<dbReference type="NCBIfam" id="TIGR01962">
    <property type="entry name" value="NuoD"/>
    <property type="match status" value="1"/>
</dbReference>
<dbReference type="NCBIfam" id="NF004739">
    <property type="entry name" value="PRK06075.1"/>
    <property type="match status" value="1"/>
</dbReference>
<dbReference type="NCBIfam" id="NF008728">
    <property type="entry name" value="PRK11742.1"/>
    <property type="match status" value="1"/>
</dbReference>
<dbReference type="PANTHER" id="PTHR11993:SF45">
    <property type="entry name" value="NADH-QUINONE OXIDOREDUCTASE SUBUNIT C_D"/>
    <property type="match status" value="1"/>
</dbReference>
<dbReference type="PANTHER" id="PTHR11993">
    <property type="entry name" value="NADH-UBIQUINONE OXIDOREDUCTASE 49 KDA SUBUNIT"/>
    <property type="match status" value="1"/>
</dbReference>
<dbReference type="Pfam" id="PF00329">
    <property type="entry name" value="Complex1_30kDa"/>
    <property type="match status" value="1"/>
</dbReference>
<dbReference type="Pfam" id="PF00346">
    <property type="entry name" value="Complex1_49kDa"/>
    <property type="match status" value="1"/>
</dbReference>
<dbReference type="SUPFAM" id="SSF56762">
    <property type="entry name" value="HydB/Nqo4-like"/>
    <property type="match status" value="1"/>
</dbReference>
<dbReference type="SUPFAM" id="SSF143243">
    <property type="entry name" value="Nqo5-like"/>
    <property type="match status" value="1"/>
</dbReference>
<dbReference type="PROSITE" id="PS00542">
    <property type="entry name" value="COMPLEX1_30K"/>
    <property type="match status" value="1"/>
</dbReference>
<dbReference type="PROSITE" id="PS00535">
    <property type="entry name" value="COMPLEX1_49K"/>
    <property type="match status" value="1"/>
</dbReference>
<protein>
    <recommendedName>
        <fullName evidence="1">NADH-quinone oxidoreductase subunit C/D</fullName>
        <ecNumber evidence="1">7.1.1.-</ecNumber>
    </recommendedName>
    <alternativeName>
        <fullName evidence="1">NADH dehydrogenase I subunit C/D</fullName>
    </alternativeName>
    <alternativeName>
        <fullName evidence="1">NDH-1 subunit C/D</fullName>
    </alternativeName>
</protein>
<proteinExistence type="inferred from homology"/>
<reference key="1">
    <citation type="journal article" date="2002" name="Nucleic Acids Res.">
        <title>Genome sequence of Shigella flexneri 2a: insights into pathogenicity through comparison with genomes of Escherichia coli K12 and O157.</title>
        <authorList>
            <person name="Jin Q."/>
            <person name="Yuan Z."/>
            <person name="Xu J."/>
            <person name="Wang Y."/>
            <person name="Shen Y."/>
            <person name="Lu W."/>
            <person name="Wang J."/>
            <person name="Liu H."/>
            <person name="Yang J."/>
            <person name="Yang F."/>
            <person name="Zhang X."/>
            <person name="Zhang J."/>
            <person name="Yang G."/>
            <person name="Wu H."/>
            <person name="Qu D."/>
            <person name="Dong J."/>
            <person name="Sun L."/>
            <person name="Xue Y."/>
            <person name="Zhao A."/>
            <person name="Gao Y."/>
            <person name="Zhu J."/>
            <person name="Kan B."/>
            <person name="Ding K."/>
            <person name="Chen S."/>
            <person name="Cheng H."/>
            <person name="Yao Z."/>
            <person name="He B."/>
            <person name="Chen R."/>
            <person name="Ma D."/>
            <person name="Qiang B."/>
            <person name="Wen Y."/>
            <person name="Hou Y."/>
            <person name="Yu J."/>
        </authorList>
    </citation>
    <scope>NUCLEOTIDE SEQUENCE [LARGE SCALE GENOMIC DNA]</scope>
    <source>
        <strain>301 / Serotype 2a</strain>
    </source>
</reference>
<reference key="2">
    <citation type="journal article" date="2003" name="Infect. Immun.">
        <title>Complete genome sequence and comparative genomics of Shigella flexneri serotype 2a strain 2457T.</title>
        <authorList>
            <person name="Wei J."/>
            <person name="Goldberg M.B."/>
            <person name="Burland V."/>
            <person name="Venkatesan M.M."/>
            <person name="Deng W."/>
            <person name="Fournier G."/>
            <person name="Mayhew G.F."/>
            <person name="Plunkett G. III"/>
            <person name="Rose D.J."/>
            <person name="Darling A."/>
            <person name="Mau B."/>
            <person name="Perna N.T."/>
            <person name="Payne S.M."/>
            <person name="Runyen-Janecky L.J."/>
            <person name="Zhou S."/>
            <person name="Schwartz D.C."/>
            <person name="Blattner F.R."/>
        </authorList>
    </citation>
    <scope>NUCLEOTIDE SEQUENCE [LARGE SCALE GENOMIC DNA]</scope>
    <source>
        <strain>ATCC 700930 / 2457T / Serotype 2a</strain>
    </source>
</reference>
<evidence type="ECO:0000255" key="1">
    <source>
        <dbReference type="HAMAP-Rule" id="MF_01359"/>
    </source>
</evidence>
<comment type="function">
    <text evidence="1">NDH-1 shuttles electrons from NADH, via FMN and iron-sulfur (Fe-S) centers, to quinones in the respiratory chain. The immediate electron acceptor for the enzyme in this species is believed to be ubiquinone. Couples the redox reaction to proton translocation (for every two electrons transferred, four hydrogen ions are translocated across the cytoplasmic membrane), and thus conserves the redox energy in a proton gradient.</text>
</comment>
<comment type="catalytic activity">
    <reaction evidence="1">
        <text>a quinone + NADH + 5 H(+)(in) = a quinol + NAD(+) + 4 H(+)(out)</text>
        <dbReference type="Rhea" id="RHEA:57888"/>
        <dbReference type="ChEBI" id="CHEBI:15378"/>
        <dbReference type="ChEBI" id="CHEBI:24646"/>
        <dbReference type="ChEBI" id="CHEBI:57540"/>
        <dbReference type="ChEBI" id="CHEBI:57945"/>
        <dbReference type="ChEBI" id="CHEBI:132124"/>
    </reaction>
</comment>
<comment type="subunit">
    <text evidence="1">NDH-1 is composed of 13 different subunits. Subunits NuoB, CD, E, F, and G constitute the peripheral sector of the complex.</text>
</comment>
<comment type="subcellular location">
    <subcellularLocation>
        <location evidence="1">Cell inner membrane</location>
        <topology evidence="1">Peripheral membrane protein</topology>
        <orientation evidence="1">Cytoplasmic side</orientation>
    </subcellularLocation>
</comment>
<comment type="similarity">
    <text evidence="1">In the N-terminal section; belongs to the complex I 30 kDa subunit family.</text>
</comment>
<comment type="similarity">
    <text evidence="1">In the C-terminal section; belongs to the complex I 49 kDa subunit family.</text>
</comment>
<name>NUOCD_SHIFL</name>